<name>NS1_DSDNV</name>
<comment type="function">
    <text evidence="2">Multifunctional protein which displays endonuclease and helicase activities required for initiating and directing viral DNA replication. Also plays a role in viral packaging and transactivation of several promoters. Binds site-specifically to 2-3 approximate tandem copies within the origins of replication (Ori), unwinds this hairpin region and nicks one DNA strand thereby initiating the rolling circle replication (RCR).</text>
</comment>
<comment type="catalytic activity">
    <reaction evidence="2">
        <text>ATP + H2O = ADP + phosphate + H(+)</text>
        <dbReference type="Rhea" id="RHEA:13065"/>
        <dbReference type="ChEBI" id="CHEBI:15377"/>
        <dbReference type="ChEBI" id="CHEBI:15378"/>
        <dbReference type="ChEBI" id="CHEBI:30616"/>
        <dbReference type="ChEBI" id="CHEBI:43474"/>
        <dbReference type="ChEBI" id="CHEBI:456216"/>
        <dbReference type="EC" id="3.6.4.12"/>
    </reaction>
</comment>
<comment type="cofactor">
    <cofactor evidence="2">
        <name>Mg(2+)</name>
        <dbReference type="ChEBI" id="CHEBI:18420"/>
    </cofactor>
    <text evidence="2">The endonuclease active site can probably bind other divalent cations.</text>
</comment>
<comment type="subunit">
    <text evidence="2">Homooligomer.</text>
</comment>
<comment type="subcellular location">
    <subcellularLocation>
        <location evidence="1">Host nucleus</location>
    </subcellularLocation>
</comment>
<comment type="domain">
    <text evidence="2 3">In the N-terminus, the endonuclease region is involved in binding to the origin of replication. In the middle, there are the ATPase and helicase activities (By similarity). The C-terminus probably contains a transactivation domain (By similarity).</text>
</comment>
<comment type="similarity">
    <text evidence="7">Belongs to the parvoviruses initiator protein NS1 family.</text>
</comment>
<evidence type="ECO:0000250" key="1">
    <source>
        <dbReference type="UniProtKB" id="D0EZM8"/>
    </source>
</evidence>
<evidence type="ECO:0000250" key="2">
    <source>
        <dbReference type="UniProtKB" id="P03134"/>
    </source>
</evidence>
<evidence type="ECO:0000250" key="3">
    <source>
        <dbReference type="UniProtKB" id="Q9PZT1"/>
    </source>
</evidence>
<evidence type="ECO:0000255" key="4">
    <source>
        <dbReference type="PROSITE-ProRule" id="PRU00551"/>
    </source>
</evidence>
<evidence type="ECO:0000255" key="5">
    <source>
        <dbReference type="PROSITE-ProRule" id="PRU01366"/>
    </source>
</evidence>
<evidence type="ECO:0000256" key="6">
    <source>
        <dbReference type="SAM" id="MobiDB-lite"/>
    </source>
</evidence>
<evidence type="ECO:0000305" key="7"/>
<organismHost>
    <name type="scientific">Diatraea saccharalis</name>
    <name type="common">sugarcane borer</name>
    <dbReference type="NCBI Taxonomy" id="40085"/>
</organismHost>
<keyword id="KW-0067">ATP-binding</keyword>
<keyword id="KW-0190">Covalent protein-DNA linkage</keyword>
<keyword id="KW-0235">DNA replication</keyword>
<keyword id="KW-0238">DNA-binding</keyword>
<keyword id="KW-0255">Endonuclease</keyword>
<keyword id="KW-0347">Helicase</keyword>
<keyword id="KW-1048">Host nucleus</keyword>
<keyword id="KW-0378">Hydrolase</keyword>
<keyword id="KW-0460">Magnesium</keyword>
<keyword id="KW-0479">Metal-binding</keyword>
<keyword id="KW-0540">Nuclease</keyword>
<keyword id="KW-0547">Nucleotide-binding</keyword>
<keyword id="KW-0804">Transcription</keyword>
<keyword id="KW-0805">Transcription regulation</keyword>
<keyword id="KW-1194">Viral DNA replication</keyword>
<keyword id="KW-0231">Viral genome packaging</keyword>
<keyword id="KW-1188">Viral release from host cell</keyword>
<accession>O71153</accession>
<sequence length="545" mass="63476">MNNGDSNRETDSTTRSDQSNLRESPTRSPSSEQCSMVATTSRKREWAYGGRGTMASLAKESQENFQYMAEELEKMGNQFFGYVTGQSVKPSSAYISDVIILRDIQLRDQCLDVLREYGRSRRNGLFGFSEEGDHIHVIHDCSYTNRSCRDIWLGQVKPFGTVQKTGKPVKYIWEFKRTDWYDVFIYFFIRKRGERAIYIRGESGKIPSNDECVRWAREFKEREMVSSSDCTDYYECEQQEHKISRRSDAGSTNGRLYEKKTYSAGKFAYIRQKTKALLRKYYVSPISAICDVPEFRDDDLLCDPKNRDYIQAACEDFGKDLNAMSLREIYNLLTEDYNFTDDKELNPYAQFISSMKYDNLEGSLNIVNELLKYQCNDDEDLIVEFLTNLVNVLDRRIPKLNAFLIISPPSGGKNFFFDMIFGLLLSYGQLGQANRHNLFAFQEAPNKRVLLWNEPNYESSLTDTIKMMFGGDPYTVRVKNRMDAHVKRTPVIILTNNTVPFMYELAFSDRIIQYKWNAAPFLKDYELKPHPMTFFLLLSKYNITF</sequence>
<gene>
    <name type="primary">NS1</name>
</gene>
<feature type="chain" id="PRO_0000222479" description="Initiator protein NS1">
    <location>
        <begin position="1"/>
        <end position="545"/>
    </location>
</feature>
<feature type="domain" description="PV NS1-Nuc" evidence="5">
    <location>
        <begin position="12"/>
        <end position="277"/>
    </location>
</feature>
<feature type="domain" description="SF3 helicase" evidence="4">
    <location>
        <begin position="346"/>
        <end position="545"/>
    </location>
</feature>
<feature type="region of interest" description="Disordered" evidence="6">
    <location>
        <begin position="1"/>
        <end position="39"/>
    </location>
</feature>
<feature type="short sequence motif" description="RCR-2" evidence="5">
    <location>
        <begin position="134"/>
        <end position="136"/>
    </location>
</feature>
<feature type="compositionally biased region" description="Basic and acidic residues" evidence="6">
    <location>
        <begin position="1"/>
        <end position="14"/>
    </location>
</feature>
<feature type="compositionally biased region" description="Polar residues" evidence="6">
    <location>
        <begin position="15"/>
        <end position="39"/>
    </location>
</feature>
<feature type="binding site" evidence="5">
    <location>
        <position position="130"/>
    </location>
    <ligand>
        <name>a divalent metal cation</name>
        <dbReference type="ChEBI" id="CHEBI:60240"/>
    </ligand>
</feature>
<feature type="binding site" evidence="5">
    <location>
        <position position="134"/>
    </location>
    <ligand>
        <name>a divalent metal cation</name>
        <dbReference type="ChEBI" id="CHEBI:60240"/>
    </ligand>
</feature>
<feature type="binding site" evidence="5">
    <location>
        <position position="136"/>
    </location>
    <ligand>
        <name>a divalent metal cation</name>
        <dbReference type="ChEBI" id="CHEBI:60240"/>
    </ligand>
</feature>
<proteinExistence type="inferred from homology"/>
<dbReference type="EC" id="3.1.21.-" evidence="3"/>
<dbReference type="EC" id="3.6.4.12" evidence="3"/>
<dbReference type="EMBL" id="AF036333">
    <property type="protein sequence ID" value="AAC17999.1"/>
    <property type="molecule type" value="Genomic_DNA"/>
</dbReference>
<dbReference type="RefSeq" id="NP_046813.1">
    <property type="nucleotide sequence ID" value="NC_001899.1"/>
</dbReference>
<dbReference type="KEGG" id="vg:1449608"/>
<dbReference type="OrthoDB" id="12894at10239"/>
<dbReference type="Proteomes" id="UP000007205">
    <property type="component" value="Genome"/>
</dbReference>
<dbReference type="GO" id="GO:0042025">
    <property type="term" value="C:host cell nucleus"/>
    <property type="evidence" value="ECO:0007669"/>
    <property type="project" value="UniProtKB-SubCell"/>
</dbReference>
<dbReference type="GO" id="GO:0005524">
    <property type="term" value="F:ATP binding"/>
    <property type="evidence" value="ECO:0007669"/>
    <property type="project" value="UniProtKB-KW"/>
</dbReference>
<dbReference type="GO" id="GO:0016887">
    <property type="term" value="F:ATP hydrolysis activity"/>
    <property type="evidence" value="ECO:0007669"/>
    <property type="project" value="RHEA"/>
</dbReference>
<dbReference type="GO" id="GO:0003677">
    <property type="term" value="F:DNA binding"/>
    <property type="evidence" value="ECO:0007669"/>
    <property type="project" value="UniProtKB-KW"/>
</dbReference>
<dbReference type="GO" id="GO:0004519">
    <property type="term" value="F:endonuclease activity"/>
    <property type="evidence" value="ECO:0007669"/>
    <property type="project" value="UniProtKB-KW"/>
</dbReference>
<dbReference type="GO" id="GO:0004386">
    <property type="term" value="F:helicase activity"/>
    <property type="evidence" value="ECO:0007669"/>
    <property type="project" value="UniProtKB-KW"/>
</dbReference>
<dbReference type="GO" id="GO:0046872">
    <property type="term" value="F:metal ion binding"/>
    <property type="evidence" value="ECO:0007669"/>
    <property type="project" value="UniProtKB-KW"/>
</dbReference>
<dbReference type="GO" id="GO:0006260">
    <property type="term" value="P:DNA replication"/>
    <property type="evidence" value="ECO:0007669"/>
    <property type="project" value="UniProtKB-KW"/>
</dbReference>
<dbReference type="GO" id="GO:0039693">
    <property type="term" value="P:viral DNA genome replication"/>
    <property type="evidence" value="ECO:0007669"/>
    <property type="project" value="UniProtKB-KW"/>
</dbReference>
<dbReference type="Gene3D" id="3.40.50.300">
    <property type="entry name" value="P-loop containing nucleotide triphosphate hydrolases"/>
    <property type="match status" value="1"/>
</dbReference>
<dbReference type="InterPro" id="IPR014015">
    <property type="entry name" value="Helicase_SF3_DNA-vir"/>
</dbReference>
<dbReference type="InterPro" id="IPR027417">
    <property type="entry name" value="P-loop_NTPase"/>
</dbReference>
<dbReference type="InterPro" id="IPR001257">
    <property type="entry name" value="Parvovirus_NS1_helicase"/>
</dbReference>
<dbReference type="InterPro" id="IPR049901">
    <property type="entry name" value="PV_NS1-NUC"/>
</dbReference>
<dbReference type="Pfam" id="PF01057">
    <property type="entry name" value="Parvo_NS1"/>
    <property type="match status" value="1"/>
</dbReference>
<dbReference type="SUPFAM" id="SSF52540">
    <property type="entry name" value="P-loop containing nucleoside triphosphate hydrolases"/>
    <property type="match status" value="1"/>
</dbReference>
<dbReference type="PROSITE" id="PS52022">
    <property type="entry name" value="PV_NS1_NUC"/>
    <property type="match status" value="1"/>
</dbReference>
<dbReference type="PROSITE" id="PS51206">
    <property type="entry name" value="SF3_HELICASE_1"/>
    <property type="match status" value="1"/>
</dbReference>
<protein>
    <recommendedName>
        <fullName evidence="2">Initiator protein NS1</fullName>
        <shortName>NS1</shortName>
        <ecNumber evidence="3">3.1.21.-</ecNumber>
        <ecNumber evidence="3">3.6.4.12</ecNumber>
    </recommendedName>
    <alternativeName>
        <fullName>Non-structural protein 1</fullName>
    </alternativeName>
    <alternativeName>
        <fullName>Non-structural protein NS1</fullName>
    </alternativeName>
</protein>
<reference key="1">
    <citation type="submission" date="1997-12" db="EMBL/GenBank/DDBJ databases">
        <title>Complete nucleotide sequence and genome organization of an infectious clone of Diatraea saccharalis densovirus (DsDNV).</title>
        <authorList>
            <person name="Boublik Y."/>
            <person name="Kouassi K.N."/>
            <person name="Cavallaro C."/>
            <person name="Bergoin M."/>
        </authorList>
    </citation>
    <scope>NUCLEOTIDE SEQUENCE [GENOMIC DNA]</scope>
</reference>
<organism>
    <name type="scientific">Diatraea saccharalis densovirus</name>
    <name type="common">DsDNV</name>
    <dbReference type="NCBI Taxonomy" id="72003"/>
    <lineage>
        <taxon>Viruses</taxon>
        <taxon>Monodnaviria</taxon>
        <taxon>Shotokuvirae</taxon>
        <taxon>Cossaviricota</taxon>
        <taxon>Quintoviricetes</taxon>
        <taxon>Piccovirales</taxon>
        <taxon>Parvoviridae</taxon>
        <taxon>Densovirinae</taxon>
    </lineage>
</organism>